<keyword id="KW-0067">ATP-binding</keyword>
<keyword id="KW-0547">Nucleotide-binding</keyword>
<keyword id="KW-0346">Stress response</keyword>
<evidence type="ECO:0000256" key="1">
    <source>
        <dbReference type="SAM" id="MobiDB-lite"/>
    </source>
</evidence>
<evidence type="ECO:0000305" key="2"/>
<dbReference type="EMBL" id="M96662">
    <property type="protein sequence ID" value="AAC41541.1"/>
    <property type="molecule type" value="Genomic_DNA"/>
</dbReference>
<dbReference type="SMR" id="P41826"/>
<dbReference type="STRING" id="7167.P41826"/>
<dbReference type="VEuPathDB" id="VectorBase:AALB016781"/>
<dbReference type="VEuPathDB" id="VectorBase:AALB20_035927"/>
<dbReference type="Proteomes" id="UP000069272">
    <property type="component" value="Unassembled WGS sequence"/>
</dbReference>
<dbReference type="GO" id="GO:0005524">
    <property type="term" value="F:ATP binding"/>
    <property type="evidence" value="ECO:0007669"/>
    <property type="project" value="UniProtKB-KW"/>
</dbReference>
<dbReference type="GO" id="GO:0140662">
    <property type="term" value="F:ATP-dependent protein folding chaperone"/>
    <property type="evidence" value="ECO:0007669"/>
    <property type="project" value="InterPro"/>
</dbReference>
<dbReference type="CDD" id="cd10233">
    <property type="entry name" value="ASKHA_NBD_HSP70_HSPA1"/>
    <property type="match status" value="1"/>
</dbReference>
<dbReference type="FunFam" id="2.60.34.10:FF:000002">
    <property type="entry name" value="Heat shock 70 kDa"/>
    <property type="match status" value="1"/>
</dbReference>
<dbReference type="FunFam" id="3.30.420.40:FF:000172">
    <property type="entry name" value="Heat shock 70 kDa protein"/>
    <property type="match status" value="1"/>
</dbReference>
<dbReference type="FunFam" id="3.90.640.10:FF:000058">
    <property type="entry name" value="Heat shock 70 kDa protein"/>
    <property type="match status" value="1"/>
</dbReference>
<dbReference type="FunFam" id="3.30.30.30:FF:000001">
    <property type="entry name" value="heat shock 70 kDa protein-like"/>
    <property type="match status" value="1"/>
</dbReference>
<dbReference type="FunFam" id="1.20.1270.10:FF:000024">
    <property type="entry name" value="Heat shock protein 70"/>
    <property type="match status" value="1"/>
</dbReference>
<dbReference type="FunFam" id="3.30.420.40:FF:000026">
    <property type="entry name" value="Heat shock protein 70"/>
    <property type="match status" value="1"/>
</dbReference>
<dbReference type="Gene3D" id="1.20.1270.10">
    <property type="match status" value="1"/>
</dbReference>
<dbReference type="Gene3D" id="3.30.30.30">
    <property type="match status" value="1"/>
</dbReference>
<dbReference type="Gene3D" id="3.30.420.40">
    <property type="match status" value="2"/>
</dbReference>
<dbReference type="Gene3D" id="3.90.640.10">
    <property type="entry name" value="Actin, Chain A, domain 4"/>
    <property type="match status" value="1"/>
</dbReference>
<dbReference type="Gene3D" id="2.60.34.10">
    <property type="entry name" value="Substrate Binding Domain Of DNAk, Chain A, domain 1"/>
    <property type="match status" value="1"/>
</dbReference>
<dbReference type="InterPro" id="IPR043129">
    <property type="entry name" value="ATPase_NBD"/>
</dbReference>
<dbReference type="InterPro" id="IPR018181">
    <property type="entry name" value="Heat_shock_70_CS"/>
</dbReference>
<dbReference type="InterPro" id="IPR029048">
    <property type="entry name" value="HSP70_C_sf"/>
</dbReference>
<dbReference type="InterPro" id="IPR029047">
    <property type="entry name" value="HSP70_peptide-bd_sf"/>
</dbReference>
<dbReference type="InterPro" id="IPR013126">
    <property type="entry name" value="Hsp_70_fam"/>
</dbReference>
<dbReference type="NCBIfam" id="NF001413">
    <property type="entry name" value="PRK00290.1"/>
    <property type="match status" value="1"/>
</dbReference>
<dbReference type="PANTHER" id="PTHR19375">
    <property type="entry name" value="HEAT SHOCK PROTEIN 70KDA"/>
    <property type="match status" value="1"/>
</dbReference>
<dbReference type="Pfam" id="PF00012">
    <property type="entry name" value="HSP70"/>
    <property type="match status" value="1"/>
</dbReference>
<dbReference type="PRINTS" id="PR00301">
    <property type="entry name" value="HEATSHOCK70"/>
</dbReference>
<dbReference type="SUPFAM" id="SSF53067">
    <property type="entry name" value="Actin-like ATPase domain"/>
    <property type="match status" value="2"/>
</dbReference>
<dbReference type="SUPFAM" id="SSF100934">
    <property type="entry name" value="Heat shock protein 70kD (HSP70), C-terminal subdomain"/>
    <property type="match status" value="1"/>
</dbReference>
<dbReference type="SUPFAM" id="SSF100920">
    <property type="entry name" value="Heat shock protein 70kD (HSP70), peptide-binding domain"/>
    <property type="match status" value="1"/>
</dbReference>
<dbReference type="PROSITE" id="PS00297">
    <property type="entry name" value="HSP70_1"/>
    <property type="match status" value="1"/>
</dbReference>
<dbReference type="PROSITE" id="PS00329">
    <property type="entry name" value="HSP70_2"/>
    <property type="match status" value="1"/>
</dbReference>
<dbReference type="PROSITE" id="PS01036">
    <property type="entry name" value="HSP70_3"/>
    <property type="match status" value="1"/>
</dbReference>
<accession>P41826</accession>
<sequence>MPSAIGIDLGTTYSCVGVFQHGKVEIIANDQGNRTTPSYVAFSDTERLIGDAAKNQVAMNPTNTVFDAKRLIGRKFDDPKIQADMKHWPFTVVNDCGKPKIRVEFKGERKTFAPEEISSMVLTKMKETAEAYLGQSVKNAVITVPAYFNDSQRQATKDAGAIAGLNVMRIINEPTAAALAYGLDKNLKGERNVLIFDLGGGTFDVSILTIDEGSLFEVRATAGDTHLGGEDFDNRMVAHFVEEFKRKFKKDLSKNARALRRLRTACERAKRTLSSSTEATIEIDALMDGIDYYTKISRARFEELCSDLFRSTLQPVEKALSDAKMDKSSIHDIVLVGGSTRIPKVQSLLQNFFAGKSLNLSINPDEAVAYGAAVQAAILSGDKDDKIQDVLLVDVAPLSLGIETAGGVMTKLIERNSRIPCKQTKIFSTYADNQPGVSIQVFEGERAMTKDNNLLGQFDLSGIPPAPRGVPQIEVTFDLDANGILNVAAKDKSSGKEKNITIKNDKGRLSQADIDRMVSEAEKYREEDEKQREAIAARNQLEAYCFNLKQSLDGEGSSKLSDADRRTVQDRCDETLRWIDGNTMAEKEEYEHQMQELSRVCSPIMTKLHQQAAGGPQPTSCGQQAGGFGGRTGPTVEEVD</sequence>
<name>HSP72_ANOAL</name>
<comment type="similarity">
    <text evidence="2">Belongs to the heat shock protein 70 family.</text>
</comment>
<organism>
    <name type="scientific">Anopheles albimanus</name>
    <name type="common">New world malaria mosquito</name>
    <dbReference type="NCBI Taxonomy" id="7167"/>
    <lineage>
        <taxon>Eukaryota</taxon>
        <taxon>Metazoa</taxon>
        <taxon>Ecdysozoa</taxon>
        <taxon>Arthropoda</taxon>
        <taxon>Hexapoda</taxon>
        <taxon>Insecta</taxon>
        <taxon>Pterygota</taxon>
        <taxon>Neoptera</taxon>
        <taxon>Endopterygota</taxon>
        <taxon>Diptera</taxon>
        <taxon>Nematocera</taxon>
        <taxon>Culicoidea</taxon>
        <taxon>Culicidae</taxon>
        <taxon>Anophelinae</taxon>
        <taxon>Anopheles</taxon>
    </lineage>
</organism>
<feature type="chain" id="PRO_0000078326" description="Heat shock protein 70 A2">
    <location>
        <begin position="1"/>
        <end position="640"/>
    </location>
</feature>
<feature type="region of interest" description="Disordered" evidence="1">
    <location>
        <begin position="608"/>
        <end position="640"/>
    </location>
</feature>
<gene>
    <name type="primary">HSP70A2</name>
    <name type="synonym">HSP70-13C-R</name>
</gene>
<proteinExistence type="inferred from homology"/>
<protein>
    <recommendedName>
        <fullName>Heat shock protein 70 A2</fullName>
    </recommendedName>
</protein>
<reference key="1">
    <citation type="journal article" date="1993" name="Insect Mol. Biol.">
        <title>The Hsp70 heat-shock gene family of the mosquito Anopheles albimanus.</title>
        <authorList>
            <person name="Benedict M.Q."/>
            <person name="Cockburn A.F."/>
            <person name="Seawright J.A."/>
        </authorList>
    </citation>
    <scope>NUCLEOTIDE SEQUENCE [GENOMIC DNA]</scope>
</reference>